<organism>
    <name type="scientific">Triticum aestivum</name>
    <name type="common">Wheat</name>
    <dbReference type="NCBI Taxonomy" id="4565"/>
    <lineage>
        <taxon>Eukaryota</taxon>
        <taxon>Viridiplantae</taxon>
        <taxon>Streptophyta</taxon>
        <taxon>Embryophyta</taxon>
        <taxon>Tracheophyta</taxon>
        <taxon>Spermatophyta</taxon>
        <taxon>Magnoliopsida</taxon>
        <taxon>Liliopsida</taxon>
        <taxon>Poales</taxon>
        <taxon>Poaceae</taxon>
        <taxon>BOP clade</taxon>
        <taxon>Pooideae</taxon>
        <taxon>Triticodae</taxon>
        <taxon>Triticeae</taxon>
        <taxon>Triticinae</taxon>
        <taxon>Triticum</taxon>
    </lineage>
</organism>
<dbReference type="EC" id="2.7.7.6" evidence="1"/>
<dbReference type="EMBL" id="AB027572">
    <property type="protein sequence ID" value="BAA78040.1"/>
    <property type="molecule type" value="Genomic_DNA"/>
</dbReference>
<dbReference type="EMBL" id="AB042240">
    <property type="protein sequence ID" value="BAB47024.1"/>
    <property type="molecule type" value="Genomic_DNA"/>
</dbReference>
<dbReference type="RefSeq" id="NP_114249.1">
    <property type="nucleotide sequence ID" value="NC_002762.1"/>
</dbReference>
<dbReference type="SMR" id="Q9XPS7"/>
<dbReference type="STRING" id="4565.Q9XPS7"/>
<dbReference type="PaxDb" id="4565-EPlTAEP00000010068"/>
<dbReference type="EnsemblPlants" id="TraesKARUn01G0031110.1">
    <property type="protein sequence ID" value="cds.TraesKARUn01G0031110.1"/>
    <property type="gene ID" value="TraesKARUn01G0031110"/>
</dbReference>
<dbReference type="EnsemblPlants" id="TraesKARUn01G0069630.1">
    <property type="protein sequence ID" value="cds.TraesKARUn01G0069630.1"/>
    <property type="gene ID" value="TraesKARUn01G0069630"/>
</dbReference>
<dbReference type="EnsemblPlants" id="TraesKARUn01G0071830.1">
    <property type="protein sequence ID" value="cds.TraesKARUn01G0071830.1"/>
    <property type="gene ID" value="TraesKARUn01G0071830"/>
</dbReference>
<dbReference type="EnsemblPlants" id="TraesKARUn01G0073430.1">
    <property type="protein sequence ID" value="cds.TraesKARUn01G0073430.1"/>
    <property type="gene ID" value="TraesKARUn01G0073430"/>
</dbReference>
<dbReference type="EnsemblPlants" id="TraesKARUn01G0073530.1">
    <property type="protein sequence ID" value="cds.TraesKARUn01G0073530.1"/>
    <property type="gene ID" value="TraesKARUn01G0073530"/>
</dbReference>
<dbReference type="EnsemblPlants" id="TraesKARUn01G0074370.1">
    <property type="protein sequence ID" value="cds.TraesKARUn01G0074370.1"/>
    <property type="gene ID" value="TraesKARUn01G0074370"/>
</dbReference>
<dbReference type="EnsemblPlants" id="TraesKARUn01G0074520.1">
    <property type="protein sequence ID" value="cds.TraesKARUn01G0074520.1"/>
    <property type="gene ID" value="TraesKARUn01G0074520"/>
</dbReference>
<dbReference type="EnsemblPlants" id="TraesKARUn01G0076270.1">
    <property type="protein sequence ID" value="cds.TraesKARUn01G0076270.1"/>
    <property type="gene ID" value="TraesKARUn01G0076270"/>
</dbReference>
<dbReference type="EnsemblPlants" id="TraesKARUn01G0079140.1">
    <property type="protein sequence ID" value="cds.TraesKARUn01G0079140.1"/>
    <property type="gene ID" value="TraesKARUn01G0079140"/>
</dbReference>
<dbReference type="EnsemblPlants" id="TraesKARUn01G0079440.1">
    <property type="protein sequence ID" value="cds.TraesKARUn01G0079440.1"/>
    <property type="gene ID" value="TraesKARUn01G0079440"/>
</dbReference>
<dbReference type="EnsemblPlants" id="TraesKARUn01G0079830.1">
    <property type="protein sequence ID" value="cds.TraesKARUn01G0079830.1"/>
    <property type="gene ID" value="TraesKARUn01G0079830"/>
</dbReference>
<dbReference type="EnsemblPlants" id="TraesKARUn01G0079950.1">
    <property type="protein sequence ID" value="cds.TraesKARUn01G0079950.1"/>
    <property type="gene ID" value="TraesKARUn01G0079950"/>
</dbReference>
<dbReference type="EnsemblPlants" id="TraesKARUn01G0082370.1">
    <property type="protein sequence ID" value="cds.TraesKARUn01G0082370.1"/>
    <property type="gene ID" value="TraesKARUn01G0082370"/>
</dbReference>
<dbReference type="EnsemblPlants" id="TraesKARUn01G0089310.1">
    <property type="protein sequence ID" value="cds.TraesKARUn01G0089310.1"/>
    <property type="gene ID" value="TraesKARUn01G0089310"/>
</dbReference>
<dbReference type="EnsemblPlants" id="TraesKARUn01G0093720.1">
    <property type="protein sequence ID" value="cds.TraesKARUn01G0093720.1"/>
    <property type="gene ID" value="TraesKARUn01G0093720"/>
</dbReference>
<dbReference type="EnsemblPlants" id="TraesKARUn01G0095750.1">
    <property type="protein sequence ID" value="cds.TraesKARUn01G0095750.1"/>
    <property type="gene ID" value="TraesKARUn01G0095750"/>
</dbReference>
<dbReference type="EnsemblPlants" id="TraesKARUn01G0095870.1">
    <property type="protein sequence ID" value="cds.TraesKARUn01G0095870.1"/>
    <property type="gene ID" value="TraesKARUn01G0095870"/>
</dbReference>
<dbReference type="EnsemblPlants" id="TraesKARUn01G0096340.1">
    <property type="protein sequence ID" value="cds.TraesKARUn01G0096340.1"/>
    <property type="gene ID" value="TraesKARUn01G0096340"/>
</dbReference>
<dbReference type="EnsemblPlants" id="TraesKARUn01G0097230.1">
    <property type="protein sequence ID" value="cds.TraesKARUn01G0097230.1"/>
    <property type="gene ID" value="TraesKARUn01G0097230"/>
</dbReference>
<dbReference type="EnsemblPlants" id="TraesKARUn01G0099990.1">
    <property type="protein sequence ID" value="cds.TraesKARUn01G0099990.1"/>
    <property type="gene ID" value="TraesKARUn01G0099990"/>
</dbReference>
<dbReference type="EnsemblPlants" id="TraesKARUn01G0100930.1">
    <property type="protein sequence ID" value="cds.TraesKARUn01G0100930.1"/>
    <property type="gene ID" value="TraesKARUn01G0100930"/>
</dbReference>
<dbReference type="EnsemblPlants" id="TraesKARUn01G0101190.1">
    <property type="protein sequence ID" value="cds.TraesKARUn01G0101190.1"/>
    <property type="gene ID" value="TraesKARUn01G0101190"/>
</dbReference>
<dbReference type="EnsemblPlants" id="TraesKARUn01G0127790.1">
    <property type="protein sequence ID" value="cds.TraesKARUn01G0127790.1"/>
    <property type="gene ID" value="TraesKARUn01G0127790"/>
</dbReference>
<dbReference type="EnsemblPlants" id="TraesKARUn01G0185780.1">
    <property type="protein sequence ID" value="cds.TraesKARUn01G0185780.1"/>
    <property type="gene ID" value="TraesKARUn01G0185780"/>
</dbReference>
<dbReference type="EnsemblPlants" id="TraesKARUn01G0191430.1">
    <property type="protein sequence ID" value="cds.TraesKARUn01G0191430.1"/>
    <property type="gene ID" value="TraesKARUn01G0191430"/>
</dbReference>
<dbReference type="EnsemblPlants" id="TraesPARA_EIv1.0_2647010.1">
    <property type="protein sequence ID" value="TraesPARA_EIv1.0_2647010.1.CDS1"/>
    <property type="gene ID" value="TraesPARA_EIv1.0_2647010"/>
</dbReference>
<dbReference type="EnsemblPlants" id="TraesPARA_EIv1.0_2647210.1">
    <property type="protein sequence ID" value="TraesPARA_EIv1.0_2647210.1.CDS1"/>
    <property type="gene ID" value="TraesPARA_EIv1.0_2647210"/>
</dbReference>
<dbReference type="EnsemblPlants" id="TraesPARA_EIv1.0_2648590.1">
    <property type="protein sequence ID" value="TraesPARA_EIv1.0_2648590.1.CDS1"/>
    <property type="gene ID" value="TraesPARA_EIv1.0_2648590"/>
</dbReference>
<dbReference type="EnsemblPlants" id="TraesPARA_EIv1.0_2650620.1">
    <property type="protein sequence ID" value="TraesPARA_EIv1.0_2650620.1.CDS1"/>
    <property type="gene ID" value="TraesPARA_EIv1.0_2650620"/>
</dbReference>
<dbReference type="EnsemblPlants" id="TraesPARA_EIv1.0_2654760.1">
    <property type="protein sequence ID" value="TraesPARA_EIv1.0_2654760.1.CDS1"/>
    <property type="gene ID" value="TraesPARA_EIv1.0_2654760"/>
</dbReference>
<dbReference type="EnsemblPlants" id="TraesPARA_EIv1.0_2660010.1">
    <property type="protein sequence ID" value="TraesPARA_EIv1.0_2660010.1.CDS1"/>
    <property type="gene ID" value="TraesPARA_EIv1.0_2660010"/>
</dbReference>
<dbReference type="EnsemblPlants" id="TraesPARA_EIv1.0_2666590.1">
    <property type="protein sequence ID" value="TraesPARA_EIv1.0_2666590.1.CDS1"/>
    <property type="gene ID" value="TraesPARA_EIv1.0_2666590"/>
</dbReference>
<dbReference type="EnsemblPlants" id="TraesPARA_EIv1.0_2674580.1">
    <property type="protein sequence ID" value="TraesPARA_EIv1.0_2674580.1.CDS1"/>
    <property type="gene ID" value="TraesPARA_EIv1.0_2674580"/>
</dbReference>
<dbReference type="EnsemblPlants" id="TraesPARA_EIv1.0_2677550.1">
    <property type="protein sequence ID" value="TraesPARA_EIv1.0_2677550.1.CDS1"/>
    <property type="gene ID" value="TraesPARA_EIv1.0_2677550"/>
</dbReference>
<dbReference type="EnsemblPlants" id="TraesPARA_EIv1.0_2678500.1">
    <property type="protein sequence ID" value="TraesPARA_EIv1.0_2678500.1.CDS1"/>
    <property type="gene ID" value="TraesPARA_EIv1.0_2678500"/>
</dbReference>
<dbReference type="EnsemblPlants" id="TraesPARA_EIv1.0_2678770.1">
    <property type="protein sequence ID" value="TraesPARA_EIv1.0_2678770.1.CDS1"/>
    <property type="gene ID" value="TraesPARA_EIv1.0_2678770"/>
</dbReference>
<dbReference type="EnsemblPlants" id="TraesPARA_EIv1.0_2681510.1">
    <property type="protein sequence ID" value="TraesPARA_EIv1.0_2681510.1.CDS1"/>
    <property type="gene ID" value="TraesPARA_EIv1.0_2681510"/>
</dbReference>
<dbReference type="GeneID" id="803173"/>
<dbReference type="Gramene" id="TraesKARUn01G0031110.1">
    <property type="protein sequence ID" value="cds.TraesKARUn01G0031110.1"/>
    <property type="gene ID" value="TraesKARUn01G0031110"/>
</dbReference>
<dbReference type="Gramene" id="TraesKARUn01G0069630.1">
    <property type="protein sequence ID" value="cds.TraesKARUn01G0069630.1"/>
    <property type="gene ID" value="TraesKARUn01G0069630"/>
</dbReference>
<dbReference type="Gramene" id="TraesKARUn01G0071830.1">
    <property type="protein sequence ID" value="cds.TraesKARUn01G0071830.1"/>
    <property type="gene ID" value="TraesKARUn01G0071830"/>
</dbReference>
<dbReference type="Gramene" id="TraesKARUn01G0073430.1">
    <property type="protein sequence ID" value="cds.TraesKARUn01G0073430.1"/>
    <property type="gene ID" value="TraesKARUn01G0073430"/>
</dbReference>
<dbReference type="Gramene" id="TraesKARUn01G0073530.1">
    <property type="protein sequence ID" value="cds.TraesKARUn01G0073530.1"/>
    <property type="gene ID" value="TraesKARUn01G0073530"/>
</dbReference>
<dbReference type="Gramene" id="TraesKARUn01G0074370.1">
    <property type="protein sequence ID" value="cds.TraesKARUn01G0074370.1"/>
    <property type="gene ID" value="TraesKARUn01G0074370"/>
</dbReference>
<dbReference type="Gramene" id="TraesKARUn01G0074520.1">
    <property type="protein sequence ID" value="cds.TraesKARUn01G0074520.1"/>
    <property type="gene ID" value="TraesKARUn01G0074520"/>
</dbReference>
<dbReference type="Gramene" id="TraesKARUn01G0076270.1">
    <property type="protein sequence ID" value="cds.TraesKARUn01G0076270.1"/>
    <property type="gene ID" value="TraesKARUn01G0076270"/>
</dbReference>
<dbReference type="Gramene" id="TraesKARUn01G0079140.1">
    <property type="protein sequence ID" value="cds.TraesKARUn01G0079140.1"/>
    <property type="gene ID" value="TraesKARUn01G0079140"/>
</dbReference>
<dbReference type="Gramene" id="TraesKARUn01G0079440.1">
    <property type="protein sequence ID" value="cds.TraesKARUn01G0079440.1"/>
    <property type="gene ID" value="TraesKARUn01G0079440"/>
</dbReference>
<dbReference type="Gramene" id="TraesKARUn01G0079830.1">
    <property type="protein sequence ID" value="cds.TraesKARUn01G0079830.1"/>
    <property type="gene ID" value="TraesKARUn01G0079830"/>
</dbReference>
<dbReference type="Gramene" id="TraesKARUn01G0079950.1">
    <property type="protein sequence ID" value="cds.TraesKARUn01G0079950.1"/>
    <property type="gene ID" value="TraesKARUn01G0079950"/>
</dbReference>
<dbReference type="Gramene" id="TraesKARUn01G0082370.1">
    <property type="protein sequence ID" value="cds.TraesKARUn01G0082370.1"/>
    <property type="gene ID" value="TraesKARUn01G0082370"/>
</dbReference>
<dbReference type="Gramene" id="TraesKARUn01G0089310.1">
    <property type="protein sequence ID" value="cds.TraesKARUn01G0089310.1"/>
    <property type="gene ID" value="TraesKARUn01G0089310"/>
</dbReference>
<dbReference type="Gramene" id="TraesKARUn01G0093720.1">
    <property type="protein sequence ID" value="cds.TraesKARUn01G0093720.1"/>
    <property type="gene ID" value="TraesKARUn01G0093720"/>
</dbReference>
<dbReference type="Gramene" id="TraesKARUn01G0095750.1">
    <property type="protein sequence ID" value="cds.TraesKARUn01G0095750.1"/>
    <property type="gene ID" value="TraesKARUn01G0095750"/>
</dbReference>
<dbReference type="Gramene" id="TraesKARUn01G0095870.1">
    <property type="protein sequence ID" value="cds.TraesKARUn01G0095870.1"/>
    <property type="gene ID" value="TraesKARUn01G0095870"/>
</dbReference>
<dbReference type="Gramene" id="TraesKARUn01G0096340.1">
    <property type="protein sequence ID" value="cds.TraesKARUn01G0096340.1"/>
    <property type="gene ID" value="TraesKARUn01G0096340"/>
</dbReference>
<dbReference type="Gramene" id="TraesKARUn01G0097230.1">
    <property type="protein sequence ID" value="cds.TraesKARUn01G0097230.1"/>
    <property type="gene ID" value="TraesKARUn01G0097230"/>
</dbReference>
<dbReference type="Gramene" id="TraesKARUn01G0099990.1">
    <property type="protein sequence ID" value="cds.TraesKARUn01G0099990.1"/>
    <property type="gene ID" value="TraesKARUn01G0099990"/>
</dbReference>
<dbReference type="Gramene" id="TraesKARUn01G0100930.1">
    <property type="protein sequence ID" value="cds.TraesKARUn01G0100930.1"/>
    <property type="gene ID" value="TraesKARUn01G0100930"/>
</dbReference>
<dbReference type="Gramene" id="TraesKARUn01G0101190.1">
    <property type="protein sequence ID" value="cds.TraesKARUn01G0101190.1"/>
    <property type="gene ID" value="TraesKARUn01G0101190"/>
</dbReference>
<dbReference type="Gramene" id="TraesKARUn01G0127790.1">
    <property type="protein sequence ID" value="cds.TraesKARUn01G0127790.1"/>
    <property type="gene ID" value="TraesKARUn01G0127790"/>
</dbReference>
<dbReference type="Gramene" id="TraesKARUn01G0185780.1">
    <property type="protein sequence ID" value="cds.TraesKARUn01G0185780.1"/>
    <property type="gene ID" value="TraesKARUn01G0185780"/>
</dbReference>
<dbReference type="Gramene" id="TraesKARUn01G0191430.1">
    <property type="protein sequence ID" value="cds.TraesKARUn01G0191430.1"/>
    <property type="gene ID" value="TraesKARUn01G0191430"/>
</dbReference>
<dbReference type="Gramene" id="TraesPARA_EIv1.0_2647010.1">
    <property type="protein sequence ID" value="TraesPARA_EIv1.0_2647010.1.CDS1"/>
    <property type="gene ID" value="TraesPARA_EIv1.0_2647010"/>
</dbReference>
<dbReference type="Gramene" id="TraesPARA_EIv1.0_2647210.1">
    <property type="protein sequence ID" value="TraesPARA_EIv1.0_2647210.1.CDS1"/>
    <property type="gene ID" value="TraesPARA_EIv1.0_2647210"/>
</dbReference>
<dbReference type="Gramene" id="TraesPARA_EIv1.0_2648590.1">
    <property type="protein sequence ID" value="TraesPARA_EIv1.0_2648590.1.CDS1"/>
    <property type="gene ID" value="TraesPARA_EIv1.0_2648590"/>
</dbReference>
<dbReference type="Gramene" id="TraesPARA_EIv1.0_2650620.1">
    <property type="protein sequence ID" value="TraesPARA_EIv1.0_2650620.1.CDS1"/>
    <property type="gene ID" value="TraesPARA_EIv1.0_2650620"/>
</dbReference>
<dbReference type="Gramene" id="TraesPARA_EIv1.0_2654760.1">
    <property type="protein sequence ID" value="TraesPARA_EIv1.0_2654760.1.CDS1"/>
    <property type="gene ID" value="TraesPARA_EIv1.0_2654760"/>
</dbReference>
<dbReference type="Gramene" id="TraesPARA_EIv1.0_2660010.1">
    <property type="protein sequence ID" value="TraesPARA_EIv1.0_2660010.1.CDS1"/>
    <property type="gene ID" value="TraesPARA_EIv1.0_2660010"/>
</dbReference>
<dbReference type="Gramene" id="TraesPARA_EIv1.0_2666590.1">
    <property type="protein sequence ID" value="TraesPARA_EIv1.0_2666590.1.CDS1"/>
    <property type="gene ID" value="TraesPARA_EIv1.0_2666590"/>
</dbReference>
<dbReference type="Gramene" id="TraesPARA_EIv1.0_2674580.1">
    <property type="protein sequence ID" value="TraesPARA_EIv1.0_2674580.1.CDS1"/>
    <property type="gene ID" value="TraesPARA_EIv1.0_2674580"/>
</dbReference>
<dbReference type="Gramene" id="TraesPARA_EIv1.0_2677550.1">
    <property type="protein sequence ID" value="TraesPARA_EIv1.0_2677550.1.CDS1"/>
    <property type="gene ID" value="TraesPARA_EIv1.0_2677550"/>
</dbReference>
<dbReference type="Gramene" id="TraesPARA_EIv1.0_2678500.1">
    <property type="protein sequence ID" value="TraesPARA_EIv1.0_2678500.1.CDS1"/>
    <property type="gene ID" value="TraesPARA_EIv1.0_2678500"/>
</dbReference>
<dbReference type="Gramene" id="TraesPARA_EIv1.0_2678770.1">
    <property type="protein sequence ID" value="TraesPARA_EIv1.0_2678770.1.CDS1"/>
    <property type="gene ID" value="TraesPARA_EIv1.0_2678770"/>
</dbReference>
<dbReference type="Gramene" id="TraesPARA_EIv1.0_2681510.1">
    <property type="protein sequence ID" value="TraesPARA_EIv1.0_2681510.1.CDS1"/>
    <property type="gene ID" value="TraesPARA_EIv1.0_2681510"/>
</dbReference>
<dbReference type="KEGG" id="taes:803173"/>
<dbReference type="eggNOG" id="KOG0214">
    <property type="taxonomic scope" value="Eukaryota"/>
</dbReference>
<dbReference type="Proteomes" id="UP000019116">
    <property type="component" value="Chloroplast"/>
</dbReference>
<dbReference type="ExpressionAtlas" id="Q9XPS7">
    <property type="expression patterns" value="baseline and differential"/>
</dbReference>
<dbReference type="GO" id="GO:0009507">
    <property type="term" value="C:chloroplast"/>
    <property type="evidence" value="ECO:0007669"/>
    <property type="project" value="UniProtKB-SubCell"/>
</dbReference>
<dbReference type="GO" id="GO:0000428">
    <property type="term" value="C:DNA-directed RNA polymerase complex"/>
    <property type="evidence" value="ECO:0007669"/>
    <property type="project" value="UniProtKB-KW"/>
</dbReference>
<dbReference type="GO" id="GO:0005739">
    <property type="term" value="C:mitochondrion"/>
    <property type="evidence" value="ECO:0007669"/>
    <property type="project" value="GOC"/>
</dbReference>
<dbReference type="GO" id="GO:0003677">
    <property type="term" value="F:DNA binding"/>
    <property type="evidence" value="ECO:0007669"/>
    <property type="project" value="UniProtKB-UniRule"/>
</dbReference>
<dbReference type="GO" id="GO:0003899">
    <property type="term" value="F:DNA-directed RNA polymerase activity"/>
    <property type="evidence" value="ECO:0007669"/>
    <property type="project" value="UniProtKB-UniRule"/>
</dbReference>
<dbReference type="GO" id="GO:0032549">
    <property type="term" value="F:ribonucleoside binding"/>
    <property type="evidence" value="ECO:0007669"/>
    <property type="project" value="InterPro"/>
</dbReference>
<dbReference type="GO" id="GO:0006351">
    <property type="term" value="P:DNA-templated transcription"/>
    <property type="evidence" value="ECO:0007669"/>
    <property type="project" value="UniProtKB-UniRule"/>
</dbReference>
<dbReference type="CDD" id="cd00653">
    <property type="entry name" value="RNA_pol_B_RPB2"/>
    <property type="match status" value="1"/>
</dbReference>
<dbReference type="Gene3D" id="2.40.50.100">
    <property type="match status" value="1"/>
</dbReference>
<dbReference type="Gene3D" id="2.40.50.150">
    <property type="match status" value="1"/>
</dbReference>
<dbReference type="Gene3D" id="3.90.1100.10">
    <property type="match status" value="1"/>
</dbReference>
<dbReference type="Gene3D" id="2.30.150.10">
    <property type="entry name" value="DNA-directed RNA polymerase, beta subunit, external 1 domain"/>
    <property type="match status" value="1"/>
</dbReference>
<dbReference type="Gene3D" id="2.40.270.10">
    <property type="entry name" value="DNA-directed RNA polymerase, subunit 2, domain 6"/>
    <property type="match status" value="1"/>
</dbReference>
<dbReference type="Gene3D" id="3.90.1800.10">
    <property type="entry name" value="RNA polymerase alpha subunit dimerisation domain"/>
    <property type="match status" value="1"/>
</dbReference>
<dbReference type="Gene3D" id="3.90.1110.10">
    <property type="entry name" value="RNA polymerase Rpb2, domain 2"/>
    <property type="match status" value="1"/>
</dbReference>
<dbReference type="HAMAP" id="MF_01321">
    <property type="entry name" value="RNApol_bact_RpoB"/>
    <property type="match status" value="1"/>
</dbReference>
<dbReference type="InterPro" id="IPR042107">
    <property type="entry name" value="DNA-dir_RNA_pol_bsu_ext_1_sf"/>
</dbReference>
<dbReference type="InterPro" id="IPR015712">
    <property type="entry name" value="DNA-dir_RNA_pol_su2"/>
</dbReference>
<dbReference type="InterPro" id="IPR007120">
    <property type="entry name" value="DNA-dir_RNAP_su2_dom"/>
</dbReference>
<dbReference type="InterPro" id="IPR037033">
    <property type="entry name" value="DNA-dir_RNAP_su2_hyb_sf"/>
</dbReference>
<dbReference type="InterPro" id="IPR010243">
    <property type="entry name" value="RNA_pol_bsu_bac"/>
</dbReference>
<dbReference type="InterPro" id="IPR007121">
    <property type="entry name" value="RNA_pol_bsu_CS"/>
</dbReference>
<dbReference type="InterPro" id="IPR007642">
    <property type="entry name" value="RNA_pol_Rpb2_2"/>
</dbReference>
<dbReference type="InterPro" id="IPR037034">
    <property type="entry name" value="RNA_pol_Rpb2_2_sf"/>
</dbReference>
<dbReference type="InterPro" id="IPR007645">
    <property type="entry name" value="RNA_pol_Rpb2_3"/>
</dbReference>
<dbReference type="InterPro" id="IPR007641">
    <property type="entry name" value="RNA_pol_Rpb2_7"/>
</dbReference>
<dbReference type="InterPro" id="IPR014724">
    <property type="entry name" value="RNA_pol_RPB2_OB-fold"/>
</dbReference>
<dbReference type="NCBIfam" id="NF001616">
    <property type="entry name" value="PRK00405.1"/>
    <property type="match status" value="1"/>
</dbReference>
<dbReference type="PANTHER" id="PTHR20856">
    <property type="entry name" value="DNA-DIRECTED RNA POLYMERASE I SUBUNIT 2"/>
    <property type="match status" value="1"/>
</dbReference>
<dbReference type="Pfam" id="PF04561">
    <property type="entry name" value="RNA_pol_Rpb2_2"/>
    <property type="match status" value="1"/>
</dbReference>
<dbReference type="Pfam" id="PF04565">
    <property type="entry name" value="RNA_pol_Rpb2_3"/>
    <property type="match status" value="1"/>
</dbReference>
<dbReference type="Pfam" id="PF00562">
    <property type="entry name" value="RNA_pol_Rpb2_6"/>
    <property type="match status" value="1"/>
</dbReference>
<dbReference type="Pfam" id="PF04560">
    <property type="entry name" value="RNA_pol_Rpb2_7"/>
    <property type="match status" value="1"/>
</dbReference>
<dbReference type="SUPFAM" id="SSF64484">
    <property type="entry name" value="beta and beta-prime subunits of DNA dependent RNA-polymerase"/>
    <property type="match status" value="1"/>
</dbReference>
<dbReference type="PROSITE" id="PS01166">
    <property type="entry name" value="RNA_POL_BETA"/>
    <property type="match status" value="1"/>
</dbReference>
<geneLocation type="chloroplast"/>
<name>RPOB_WHEAT</name>
<comment type="function">
    <text evidence="1">DNA-dependent RNA polymerase catalyzes the transcription of DNA into RNA using the four ribonucleoside triphosphates as substrates.</text>
</comment>
<comment type="catalytic activity">
    <reaction evidence="1">
        <text>RNA(n) + a ribonucleoside 5'-triphosphate = RNA(n+1) + diphosphate</text>
        <dbReference type="Rhea" id="RHEA:21248"/>
        <dbReference type="Rhea" id="RHEA-COMP:14527"/>
        <dbReference type="Rhea" id="RHEA-COMP:17342"/>
        <dbReference type="ChEBI" id="CHEBI:33019"/>
        <dbReference type="ChEBI" id="CHEBI:61557"/>
        <dbReference type="ChEBI" id="CHEBI:140395"/>
        <dbReference type="EC" id="2.7.7.6"/>
    </reaction>
</comment>
<comment type="subunit">
    <text evidence="1">In plastids the minimal PEP RNA polymerase catalytic core is composed of four subunits: alpha, beta, beta', and beta''. When a (nuclear-encoded) sigma factor is associated with the core the holoenzyme is formed, which can initiate transcription.</text>
</comment>
<comment type="subcellular location">
    <subcellularLocation>
        <location>Plastid</location>
        <location>Chloroplast</location>
    </subcellularLocation>
</comment>
<comment type="similarity">
    <text evidence="1">Belongs to the RNA polymerase beta chain family.</text>
</comment>
<evidence type="ECO:0000255" key="1">
    <source>
        <dbReference type="HAMAP-Rule" id="MF_01321"/>
    </source>
</evidence>
<gene>
    <name evidence="1" type="primary">rpoB</name>
</gene>
<feature type="chain" id="PRO_0000048052" description="DNA-directed RNA polymerase subunit beta">
    <location>
        <begin position="1"/>
        <end position="1076"/>
    </location>
</feature>
<reference key="1">
    <citation type="submission" date="1999-05" db="EMBL/GenBank/DDBJ databases">
        <title>Molecular analysis of a 21.1-kb fragment of wheat chloroplast DNA bearing RNA polymerase subunit (rpo) genes.</title>
        <authorList>
            <person name="Matsuoka Y."/>
            <person name="Tsunewaki K."/>
            <person name="Ohnishi Y."/>
        </authorList>
    </citation>
    <scope>NUCLEOTIDE SEQUENCE [GENOMIC DNA]</scope>
    <source>
        <strain>cv. Chinese Spring</strain>
    </source>
</reference>
<reference key="2">
    <citation type="journal article" date="2000" name="Plant Mol. Biol. Rep.">
        <title>Chinese spring wheat (Triticum aestivum L.) chloroplast genome: complete sequence and contig clones.</title>
        <authorList>
            <person name="Ogihara Y."/>
            <person name="Isono K."/>
            <person name="Kojima T."/>
            <person name="Endo A."/>
            <person name="Hanaoka M."/>
            <person name="Shiina T."/>
            <person name="Terachi T."/>
            <person name="Utsugi S."/>
            <person name="Murata M."/>
            <person name="Mori N."/>
            <person name="Takumi S."/>
            <person name="Ikeo K."/>
            <person name="Gojobori T."/>
            <person name="Murai R."/>
            <person name="Murai K."/>
            <person name="Matsuoka Y."/>
            <person name="Ohnishi Y."/>
            <person name="Tajiri H."/>
            <person name="Tsunewaki K."/>
        </authorList>
    </citation>
    <scope>NUCLEOTIDE SEQUENCE [LARGE SCALE GENOMIC DNA]</scope>
    <source>
        <strain>cv. Chinese Spring</strain>
    </source>
</reference>
<accession>Q9XPS7</accession>
<proteinExistence type="inferred from homology"/>
<sequence>MLRNGNEGMSTIPGFSQIQFEGFCRFINQALAEELDKFPTIKDPDHEIAFQLFAKGYQLLEPSIKERDAVYESLTYSSELYVSARLIFGFDVQKQTISIGNIPIMNSLGTFIINGIYRIVINQILLSPGIYYRSELDHKGISIYTGTIISDWGGRSELAIDKKERIWARVSRKQKISILVLSSAMGSNLREILDNVSYPEIFLSFPNAKEKKRIESKEKAILEFYQQFACVGGDLVFSESLCEELQKKFFQQKCELGRIGRRNMNRRLNLDIPQNNTFLLPRDVLAATDHLIGMKFGTGILDDDDMNHLKNKRIRSVADLLQDQFGLALGRLQHAVQKTIRRVFIRQSKPTPQTLVTPTSTSILLITTYETFFGTYPLSQVFDQTNPLTQTVHGRKVSCLGPGGLTGRTASFRSRDIHPSHYGRICPIDTSEGINVGLTGSLAIHARIDHLWGSIESPFYEISAEKAKEKKERQVVYLSPNRDEYYMIAAGNSLSLNQGIQEEQVVPARYRQEFLTIAWEQIHVRSIFPFQYFSIGGSLIPFIEHNDANRALMSSNMQRQAVPLSRSEKCIVGTGLERQTALDSRVSIIAEREGKIISTDSHKILLSSSGKTISIPLVNHRRSNKNTCMHQKPRVPRGKSIKKGQILAEGAATVGGELALGKNVLVAYMPWEGYNFEDAVLISERLVYEDIYTSFHIRKYEIQTDTTSQGSAEKITKEIPHLEEHLLRNLDRNGVVRLGSWVETGDILVGKLTPQIASESSYIAEAGLLRAIFGLEVSTSKETSLKLPIGGRGRVIDVKWIQRDPLDIMVRVYILQKREIKVGDKVAGRHGNKGIISKILPRQDMPYLQDGTPVDMVFNPLGVPSRMNVGQIFESSLGLAGDLLKKHYRIAPFDERYEQEASRKLVFSELYEASKETKNPWVFEPEYPGKSRIFDGRTGDPFEQPVLIGKSYILKLIHQVDEKIHGRSTGPYSLVTQQPVRGRAKQGGQRVGEMEVWALEGFGVAHILQEILTYKSDHLIARQEILNATIWGKRIPNHEDPPESFRVLVRELRSLALELNHFLVSEKNFQVNREEV</sequence>
<keyword id="KW-0150">Chloroplast</keyword>
<keyword id="KW-0240">DNA-directed RNA polymerase</keyword>
<keyword id="KW-0548">Nucleotidyltransferase</keyword>
<keyword id="KW-0934">Plastid</keyword>
<keyword id="KW-1185">Reference proteome</keyword>
<keyword id="KW-0804">Transcription</keyword>
<keyword id="KW-0808">Transferase</keyword>
<protein>
    <recommendedName>
        <fullName evidence="1">DNA-directed RNA polymerase subunit beta</fullName>
        <ecNumber evidence="1">2.7.7.6</ecNumber>
    </recommendedName>
    <alternativeName>
        <fullName evidence="1">PEP</fullName>
    </alternativeName>
    <alternativeName>
        <fullName evidence="1">Plastid-encoded RNA polymerase subunit beta</fullName>
        <shortName evidence="1">RNA polymerase subunit beta</shortName>
    </alternativeName>
</protein>